<sequence>MSQWLAFATQLVGVRKSHQLALQFVDLLTQGLDLSDSLLLLPSSDGRLLVPHDPQRQFAWSVTDFDVPFAHVLQSSNAMHLTAEELVFWQSNRTFSQLTSRVGMFDSVWIQPLPMDTRQVHSILLLMGESHGIVSAFENADFLKFIEVFSQQWSLLNDMEREEQRRLELKQSLTDIERDSAQRSLANALSRTLIGESAAMQKLREQIVSAANSQLSVMVQGETGTGKELVAAAVHELSSRKSAPFVAINCAAIPEHLLESELFGYCKGAFSGADSDKQGLIAQANGGTLFLDEIGDMPLTLQAKLLRVLESRTFRPLGGKQELSSDFRLVSATHVNLLDQVRKKEFRQDLYYRLFQYPITLPRLAARLEDIELLSEHFVRVFNLQHNTRIRGLNYRAIDCLKQYDFPGNVRELKHLIEFGCAQTADGTQVEASCFAHRLQTLPCLAPEATPVAVSVETENVDLEPSVALAGEPNFAVIHDLKQAVSQFEALIISERLNRFAGDRAKAAKSLGIPKRTLAYKCLKLEIKTP</sequence>
<dbReference type="EMBL" id="AE003853">
    <property type="protein sequence ID" value="AAF96031.1"/>
    <property type="molecule type" value="Genomic_DNA"/>
</dbReference>
<dbReference type="PIR" id="H82499">
    <property type="entry name" value="H82499"/>
</dbReference>
<dbReference type="RefSeq" id="NP_232518.1">
    <property type="nucleotide sequence ID" value="NC_002506.1"/>
</dbReference>
<dbReference type="RefSeq" id="WP_000084793.1">
    <property type="nucleotide sequence ID" value="NZ_LT906615.1"/>
</dbReference>
<dbReference type="SMR" id="Q9KN48"/>
<dbReference type="STRING" id="243277.VC_A0117"/>
<dbReference type="TCDB" id="3.A.23.1.1">
    <property type="family name" value="the type vi symbiosis/virulence secretory system (t6ss) family"/>
</dbReference>
<dbReference type="DNASU" id="2612409"/>
<dbReference type="EnsemblBacteria" id="AAF96031">
    <property type="protein sequence ID" value="AAF96031"/>
    <property type="gene ID" value="VC_A0117"/>
</dbReference>
<dbReference type="GeneID" id="69721918"/>
<dbReference type="KEGG" id="vch:VC_A0117"/>
<dbReference type="PATRIC" id="fig|243277.26.peg.2758"/>
<dbReference type="eggNOG" id="COG3829">
    <property type="taxonomic scope" value="Bacteria"/>
</dbReference>
<dbReference type="HOGENOM" id="CLU_000445_95_4_6"/>
<dbReference type="Proteomes" id="UP000000584">
    <property type="component" value="Chromosome 2"/>
</dbReference>
<dbReference type="GO" id="GO:0032993">
    <property type="term" value="C:protein-DNA complex"/>
    <property type="evidence" value="ECO:0000318"/>
    <property type="project" value="GO_Central"/>
</dbReference>
<dbReference type="GO" id="GO:0005524">
    <property type="term" value="F:ATP binding"/>
    <property type="evidence" value="ECO:0007669"/>
    <property type="project" value="UniProtKB-KW"/>
</dbReference>
<dbReference type="GO" id="GO:0016887">
    <property type="term" value="F:ATP hydrolysis activity"/>
    <property type="evidence" value="ECO:0007669"/>
    <property type="project" value="InterPro"/>
</dbReference>
<dbReference type="GO" id="GO:0000987">
    <property type="term" value="F:cis-regulatory region sequence-specific DNA binding"/>
    <property type="evidence" value="ECO:0000318"/>
    <property type="project" value="GO_Central"/>
</dbReference>
<dbReference type="GO" id="GO:0001216">
    <property type="term" value="F:DNA-binding transcription activator activity"/>
    <property type="evidence" value="ECO:0000318"/>
    <property type="project" value="GO_Central"/>
</dbReference>
<dbReference type="GO" id="GO:0045893">
    <property type="term" value="P:positive regulation of DNA-templated transcription"/>
    <property type="evidence" value="ECO:0000318"/>
    <property type="project" value="GO_Central"/>
</dbReference>
<dbReference type="CDD" id="cd00009">
    <property type="entry name" value="AAA"/>
    <property type="match status" value="1"/>
</dbReference>
<dbReference type="FunFam" id="3.40.50.300:FF:000006">
    <property type="entry name" value="DNA-binding transcriptional regulator NtrC"/>
    <property type="match status" value="1"/>
</dbReference>
<dbReference type="FunFam" id="1.10.8.60:FF:000180">
    <property type="entry name" value="Sigma-54 dependent transcriptional regulator"/>
    <property type="match status" value="1"/>
</dbReference>
<dbReference type="Gene3D" id="1.10.8.60">
    <property type="match status" value="1"/>
</dbReference>
<dbReference type="Gene3D" id="1.10.10.60">
    <property type="entry name" value="Homeodomain-like"/>
    <property type="match status" value="1"/>
</dbReference>
<dbReference type="Gene3D" id="3.40.50.300">
    <property type="entry name" value="P-loop containing nucleotide triphosphate hydrolases"/>
    <property type="match status" value="1"/>
</dbReference>
<dbReference type="InterPro" id="IPR003593">
    <property type="entry name" value="AAA+_ATPase"/>
</dbReference>
<dbReference type="InterPro" id="IPR009057">
    <property type="entry name" value="Homeodomain-like_sf"/>
</dbReference>
<dbReference type="InterPro" id="IPR002197">
    <property type="entry name" value="HTH_Fis"/>
</dbReference>
<dbReference type="InterPro" id="IPR027417">
    <property type="entry name" value="P-loop_NTPase"/>
</dbReference>
<dbReference type="InterPro" id="IPR002078">
    <property type="entry name" value="Sigma_54_int"/>
</dbReference>
<dbReference type="InterPro" id="IPR025662">
    <property type="entry name" value="Sigma_54_int_dom_ATP-bd_1"/>
</dbReference>
<dbReference type="InterPro" id="IPR025943">
    <property type="entry name" value="Sigma_54_int_dom_ATP-bd_2"/>
</dbReference>
<dbReference type="InterPro" id="IPR025944">
    <property type="entry name" value="Sigma_54_int_dom_CS"/>
</dbReference>
<dbReference type="PANTHER" id="PTHR32071:SF117">
    <property type="entry name" value="PTS-DEPENDENT DIHYDROXYACETONE KINASE OPERON REGULATORY PROTEIN-RELATED"/>
    <property type="match status" value="1"/>
</dbReference>
<dbReference type="PANTHER" id="PTHR32071">
    <property type="entry name" value="TRANSCRIPTIONAL REGULATORY PROTEIN"/>
    <property type="match status" value="1"/>
</dbReference>
<dbReference type="Pfam" id="PF02954">
    <property type="entry name" value="HTH_8"/>
    <property type="match status" value="1"/>
</dbReference>
<dbReference type="Pfam" id="PF00158">
    <property type="entry name" value="Sigma54_activat"/>
    <property type="match status" value="1"/>
</dbReference>
<dbReference type="PRINTS" id="PR01590">
    <property type="entry name" value="HTHFIS"/>
</dbReference>
<dbReference type="SMART" id="SM00382">
    <property type="entry name" value="AAA"/>
    <property type="match status" value="1"/>
</dbReference>
<dbReference type="SUPFAM" id="SSF46689">
    <property type="entry name" value="Homeodomain-like"/>
    <property type="match status" value="1"/>
</dbReference>
<dbReference type="SUPFAM" id="SSF52540">
    <property type="entry name" value="P-loop containing nucleoside triphosphate hydrolases"/>
    <property type="match status" value="1"/>
</dbReference>
<dbReference type="PROSITE" id="PS00675">
    <property type="entry name" value="SIGMA54_INTERACT_1"/>
    <property type="match status" value="1"/>
</dbReference>
<dbReference type="PROSITE" id="PS00676">
    <property type="entry name" value="SIGMA54_INTERACT_2"/>
    <property type="match status" value="1"/>
</dbReference>
<dbReference type="PROSITE" id="PS00688">
    <property type="entry name" value="SIGMA54_INTERACT_3"/>
    <property type="match status" value="1"/>
</dbReference>
<dbReference type="PROSITE" id="PS50045">
    <property type="entry name" value="SIGMA54_INTERACT_4"/>
    <property type="match status" value="1"/>
</dbReference>
<protein>
    <recommendedName>
        <fullName evidence="3">Transcriptional regulator VasH</fullName>
    </recommendedName>
</protein>
<comment type="function">
    <text evidence="2">Transcriptional regulator of the type VI secretion system.</text>
</comment>
<keyword id="KW-0067">ATP-binding</keyword>
<keyword id="KW-0238">DNA-binding</keyword>
<keyword id="KW-0547">Nucleotide-binding</keyword>
<keyword id="KW-1185">Reference proteome</keyword>
<keyword id="KW-0804">Transcription</keyword>
<keyword id="KW-0805">Transcription regulation</keyword>
<gene>
    <name evidence="3" type="primary">vasH</name>
    <name type="ordered locus">VC_A0117</name>
</gene>
<accession>Q9KN48</accession>
<proteinExistence type="predicted"/>
<name>VASH_VIBCH</name>
<organism>
    <name type="scientific">Vibrio cholerae serotype O1 (strain ATCC 39315 / El Tor Inaba N16961)</name>
    <dbReference type="NCBI Taxonomy" id="243277"/>
    <lineage>
        <taxon>Bacteria</taxon>
        <taxon>Pseudomonadati</taxon>
        <taxon>Pseudomonadota</taxon>
        <taxon>Gammaproteobacteria</taxon>
        <taxon>Vibrionales</taxon>
        <taxon>Vibrionaceae</taxon>
        <taxon>Vibrio</taxon>
    </lineage>
</organism>
<feature type="chain" id="PRO_0000449211" description="Transcriptional regulator VasH">
    <location>
        <begin position="1"/>
        <end position="530"/>
    </location>
</feature>
<feature type="domain" description="Sigma-54 factor interaction" evidence="1">
    <location>
        <begin position="193"/>
        <end position="422"/>
    </location>
</feature>
<feature type="binding site" evidence="1">
    <location>
        <begin position="221"/>
        <end position="228"/>
    </location>
    <ligand>
        <name>ATP</name>
        <dbReference type="ChEBI" id="CHEBI:30616"/>
    </ligand>
</feature>
<feature type="binding site" evidence="1">
    <location>
        <begin position="284"/>
        <end position="293"/>
    </location>
    <ligand>
        <name>ATP</name>
        <dbReference type="ChEBI" id="CHEBI:30616"/>
    </ligand>
</feature>
<evidence type="ECO:0000255" key="1">
    <source>
        <dbReference type="PROSITE-ProRule" id="PRU00193"/>
    </source>
</evidence>
<evidence type="ECO:0000269" key="2">
    <source>
    </source>
</evidence>
<evidence type="ECO:0000303" key="3">
    <source>
    </source>
</evidence>
<reference key="1">
    <citation type="journal article" date="2000" name="Nature">
        <title>DNA sequence of both chromosomes of the cholera pathogen Vibrio cholerae.</title>
        <authorList>
            <person name="Heidelberg J.F."/>
            <person name="Eisen J.A."/>
            <person name="Nelson W.C."/>
            <person name="Clayton R.A."/>
            <person name="Gwinn M.L."/>
            <person name="Dodson R.J."/>
            <person name="Haft D.H."/>
            <person name="Hickey E.K."/>
            <person name="Peterson J.D."/>
            <person name="Umayam L.A."/>
            <person name="Gill S.R."/>
            <person name="Nelson K.E."/>
            <person name="Read T.D."/>
            <person name="Tettelin H."/>
            <person name="Richardson D.L."/>
            <person name="Ermolaeva M.D."/>
            <person name="Vamathevan J.J."/>
            <person name="Bass S."/>
            <person name="Qin H."/>
            <person name="Dragoi I."/>
            <person name="Sellers P."/>
            <person name="McDonald L.A."/>
            <person name="Utterback T.R."/>
            <person name="Fleischmann R.D."/>
            <person name="Nierman W.C."/>
            <person name="White O."/>
            <person name="Salzberg S.L."/>
            <person name="Smith H.O."/>
            <person name="Colwell R.R."/>
            <person name="Mekalanos J.J."/>
            <person name="Venter J.C."/>
            <person name="Fraser C.M."/>
        </authorList>
    </citation>
    <scope>NUCLEOTIDE SEQUENCE [LARGE SCALE GENOMIC DNA]</scope>
    <source>
        <strain>ATCC 39315 / El Tor Inaba N16961</strain>
    </source>
</reference>
<reference key="2">
    <citation type="journal article" date="2011" name="J. Bacteriol.">
        <title>VasH is a transcriptional regulator of the type VI secretion system functional in endemic and pandemic Vibrio cholerae.</title>
        <authorList>
            <person name="Kitaoka M."/>
            <person name="Miyata S.T."/>
            <person name="Brooks T.M."/>
            <person name="Unterweger D."/>
            <person name="Pukatzki S."/>
        </authorList>
    </citation>
    <scope>FUNCTION</scope>
</reference>